<feature type="chain" id="PRO_1000059574" description="Chaperone protein DnaK">
    <location>
        <begin position="1"/>
        <end position="642"/>
    </location>
</feature>
<feature type="region of interest" description="Disordered" evidence="2">
    <location>
        <begin position="578"/>
        <end position="642"/>
    </location>
</feature>
<feature type="compositionally biased region" description="Basic and acidic residues" evidence="2">
    <location>
        <begin position="578"/>
        <end position="589"/>
    </location>
</feature>
<feature type="compositionally biased region" description="Low complexity" evidence="2">
    <location>
        <begin position="603"/>
        <end position="619"/>
    </location>
</feature>
<feature type="modified residue" description="Phosphothreonine; by autocatalysis" evidence="1">
    <location>
        <position position="198"/>
    </location>
</feature>
<dbReference type="EMBL" id="CP000155">
    <property type="protein sequence ID" value="ABC28096.1"/>
    <property type="molecule type" value="Genomic_DNA"/>
</dbReference>
<dbReference type="RefSeq" id="WP_011395169.1">
    <property type="nucleotide sequence ID" value="NC_007645.1"/>
</dbReference>
<dbReference type="SMR" id="Q2SMM8"/>
<dbReference type="STRING" id="349521.HCH_01224"/>
<dbReference type="KEGG" id="hch:HCH_01224"/>
<dbReference type="eggNOG" id="COG0443">
    <property type="taxonomic scope" value="Bacteria"/>
</dbReference>
<dbReference type="HOGENOM" id="CLU_005965_2_1_6"/>
<dbReference type="OrthoDB" id="9766019at2"/>
<dbReference type="Proteomes" id="UP000000238">
    <property type="component" value="Chromosome"/>
</dbReference>
<dbReference type="GO" id="GO:0005524">
    <property type="term" value="F:ATP binding"/>
    <property type="evidence" value="ECO:0007669"/>
    <property type="project" value="UniProtKB-UniRule"/>
</dbReference>
<dbReference type="GO" id="GO:0140662">
    <property type="term" value="F:ATP-dependent protein folding chaperone"/>
    <property type="evidence" value="ECO:0007669"/>
    <property type="project" value="InterPro"/>
</dbReference>
<dbReference type="GO" id="GO:0051082">
    <property type="term" value="F:unfolded protein binding"/>
    <property type="evidence" value="ECO:0007669"/>
    <property type="project" value="InterPro"/>
</dbReference>
<dbReference type="CDD" id="cd10234">
    <property type="entry name" value="ASKHA_NBD_HSP70_DnaK-like"/>
    <property type="match status" value="1"/>
</dbReference>
<dbReference type="FunFam" id="2.60.34.10:FF:000014">
    <property type="entry name" value="Chaperone protein DnaK HSP70"/>
    <property type="match status" value="1"/>
</dbReference>
<dbReference type="FunFam" id="3.30.30.30:FF:000003">
    <property type="entry name" value="Heat shock protein 9"/>
    <property type="match status" value="1"/>
</dbReference>
<dbReference type="FunFam" id="1.20.1270.10:FF:000001">
    <property type="entry name" value="Molecular chaperone DnaK"/>
    <property type="match status" value="1"/>
</dbReference>
<dbReference type="FunFam" id="3.30.420.40:FF:000004">
    <property type="entry name" value="Molecular chaperone DnaK"/>
    <property type="match status" value="1"/>
</dbReference>
<dbReference type="FunFam" id="3.90.640.10:FF:000003">
    <property type="entry name" value="Molecular chaperone DnaK"/>
    <property type="match status" value="1"/>
</dbReference>
<dbReference type="Gene3D" id="1.20.1270.10">
    <property type="match status" value="1"/>
</dbReference>
<dbReference type="Gene3D" id="3.30.420.40">
    <property type="match status" value="2"/>
</dbReference>
<dbReference type="Gene3D" id="3.90.640.10">
    <property type="entry name" value="Actin, Chain A, domain 4"/>
    <property type="match status" value="1"/>
</dbReference>
<dbReference type="Gene3D" id="2.60.34.10">
    <property type="entry name" value="Substrate Binding Domain Of DNAk, Chain A, domain 1"/>
    <property type="match status" value="1"/>
</dbReference>
<dbReference type="HAMAP" id="MF_00332">
    <property type="entry name" value="DnaK"/>
    <property type="match status" value="1"/>
</dbReference>
<dbReference type="InterPro" id="IPR043129">
    <property type="entry name" value="ATPase_NBD"/>
</dbReference>
<dbReference type="InterPro" id="IPR012725">
    <property type="entry name" value="Chaperone_DnaK"/>
</dbReference>
<dbReference type="InterPro" id="IPR018181">
    <property type="entry name" value="Heat_shock_70_CS"/>
</dbReference>
<dbReference type="InterPro" id="IPR029048">
    <property type="entry name" value="HSP70_C_sf"/>
</dbReference>
<dbReference type="InterPro" id="IPR029047">
    <property type="entry name" value="HSP70_peptide-bd_sf"/>
</dbReference>
<dbReference type="InterPro" id="IPR013126">
    <property type="entry name" value="Hsp_70_fam"/>
</dbReference>
<dbReference type="NCBIfam" id="NF001413">
    <property type="entry name" value="PRK00290.1"/>
    <property type="match status" value="1"/>
</dbReference>
<dbReference type="NCBIfam" id="NF003520">
    <property type="entry name" value="PRK05183.1"/>
    <property type="match status" value="1"/>
</dbReference>
<dbReference type="NCBIfam" id="TIGR02350">
    <property type="entry name" value="prok_dnaK"/>
    <property type="match status" value="1"/>
</dbReference>
<dbReference type="PANTHER" id="PTHR19375">
    <property type="entry name" value="HEAT SHOCK PROTEIN 70KDA"/>
    <property type="match status" value="1"/>
</dbReference>
<dbReference type="Pfam" id="PF00012">
    <property type="entry name" value="HSP70"/>
    <property type="match status" value="1"/>
</dbReference>
<dbReference type="PRINTS" id="PR00301">
    <property type="entry name" value="HEATSHOCK70"/>
</dbReference>
<dbReference type="SUPFAM" id="SSF53067">
    <property type="entry name" value="Actin-like ATPase domain"/>
    <property type="match status" value="2"/>
</dbReference>
<dbReference type="SUPFAM" id="SSF100934">
    <property type="entry name" value="Heat shock protein 70kD (HSP70), C-terminal subdomain"/>
    <property type="match status" value="1"/>
</dbReference>
<dbReference type="SUPFAM" id="SSF100920">
    <property type="entry name" value="Heat shock protein 70kD (HSP70), peptide-binding domain"/>
    <property type="match status" value="1"/>
</dbReference>
<dbReference type="PROSITE" id="PS00297">
    <property type="entry name" value="HSP70_1"/>
    <property type="match status" value="1"/>
</dbReference>
<dbReference type="PROSITE" id="PS00329">
    <property type="entry name" value="HSP70_2"/>
    <property type="match status" value="1"/>
</dbReference>
<dbReference type="PROSITE" id="PS01036">
    <property type="entry name" value="HSP70_3"/>
    <property type="match status" value="1"/>
</dbReference>
<evidence type="ECO:0000255" key="1">
    <source>
        <dbReference type="HAMAP-Rule" id="MF_00332"/>
    </source>
</evidence>
<evidence type="ECO:0000256" key="2">
    <source>
        <dbReference type="SAM" id="MobiDB-lite"/>
    </source>
</evidence>
<protein>
    <recommendedName>
        <fullName evidence="1">Chaperone protein DnaK</fullName>
    </recommendedName>
    <alternativeName>
        <fullName evidence="1">HSP70</fullName>
    </alternativeName>
    <alternativeName>
        <fullName evidence="1">Heat shock 70 kDa protein</fullName>
    </alternativeName>
    <alternativeName>
        <fullName evidence="1">Heat shock protein 70</fullName>
    </alternativeName>
</protein>
<reference key="1">
    <citation type="journal article" date="2005" name="Nucleic Acids Res.">
        <title>Genomic blueprint of Hahella chejuensis, a marine microbe producing an algicidal agent.</title>
        <authorList>
            <person name="Jeong H."/>
            <person name="Yim J.H."/>
            <person name="Lee C."/>
            <person name="Choi S.-H."/>
            <person name="Park Y.K."/>
            <person name="Yoon S.H."/>
            <person name="Hur C.-G."/>
            <person name="Kang H.-Y."/>
            <person name="Kim D."/>
            <person name="Lee H.H."/>
            <person name="Park K.H."/>
            <person name="Park S.-H."/>
            <person name="Park H.-S."/>
            <person name="Lee H.K."/>
            <person name="Oh T.K."/>
            <person name="Kim J.F."/>
        </authorList>
    </citation>
    <scope>NUCLEOTIDE SEQUENCE [LARGE SCALE GENOMIC DNA]</scope>
    <source>
        <strain>KCTC 2396</strain>
    </source>
</reference>
<proteinExistence type="inferred from homology"/>
<comment type="function">
    <text evidence="1">Acts as a chaperone.</text>
</comment>
<comment type="induction">
    <text evidence="1">By stress conditions e.g. heat shock.</text>
</comment>
<comment type="similarity">
    <text evidence="1">Belongs to the heat shock protein 70 family.</text>
</comment>
<organism>
    <name type="scientific">Hahella chejuensis (strain KCTC 2396)</name>
    <dbReference type="NCBI Taxonomy" id="349521"/>
    <lineage>
        <taxon>Bacteria</taxon>
        <taxon>Pseudomonadati</taxon>
        <taxon>Pseudomonadota</taxon>
        <taxon>Gammaproteobacteria</taxon>
        <taxon>Oceanospirillales</taxon>
        <taxon>Hahellaceae</taxon>
        <taxon>Hahella</taxon>
    </lineage>
</organism>
<keyword id="KW-0067">ATP-binding</keyword>
<keyword id="KW-0143">Chaperone</keyword>
<keyword id="KW-0547">Nucleotide-binding</keyword>
<keyword id="KW-0597">Phosphoprotein</keyword>
<keyword id="KW-1185">Reference proteome</keyword>
<keyword id="KW-0346">Stress response</keyword>
<gene>
    <name evidence="1" type="primary">dnaK</name>
    <name type="ordered locus">HCH_01224</name>
</gene>
<accession>Q2SMM8</accession>
<name>DNAK_HAHCH</name>
<sequence>MGKIIGIDLGTTNSCVAILEGDKPRVIENSEGGRTTPSIVAYTDDETLVGQSAKRQAVTNPTNTLFAIKRLIGRRFEDDVVQKDIKMVPYTIAKADNGDAWVDVKGKKMAPPQISAEVLKKMKKTAEDFLGEKVTEAVITVPAYFNDAQRQATKDAGRIAGLEVKRIINEPTAAALAYGMDKKGGDRKVAVYDLGGGTFDISIIEIADVDGEMQFEVLATNGDTFLGGEDFDLRLIDYLAQEFKKDSGIDLKGDPLAMQRLKEAAEKAKIELSSSQQTDVNLPYITADASGPKHLNVKVTRAKLESLVEELVERSLEPCRIALKDSGCSSSEIDEVILVGGQTRMPLVQSKVADFFGKEARKDVNPDEAVAIGAAIQGAVLSGDVKDVLLLDVTPLSLSIETMGGVSTPIIEKNTTIPTKKSQVFSTAEDNQTAVTIHVLQGERKQAQMNKSLGRFDLTGLPPAPRGVPQVEVTFDIDANGIMHVSAKDKATGKEQSIVIKASSGLSEDEIDKMVQDAEAHAAEDKKFEELAASRNQADALVHATQKTLKDAGDKVTAEEKVAIEAAIKELEEAIKGDDKEAIESRMQKLSEASSSMAQKMYAEQAAQQGGDAGAQAEDAAGKPADDAVDAEFEEVKDGDKK</sequence>